<reference key="1">
    <citation type="submission" date="2008-03" db="EMBL/GenBank/DDBJ databases">
        <title>Complete sequence of Leptothrix cholodnii SP-6.</title>
        <authorList>
            <consortium name="US DOE Joint Genome Institute"/>
            <person name="Copeland A."/>
            <person name="Lucas S."/>
            <person name="Lapidus A."/>
            <person name="Glavina del Rio T."/>
            <person name="Dalin E."/>
            <person name="Tice H."/>
            <person name="Bruce D."/>
            <person name="Goodwin L."/>
            <person name="Pitluck S."/>
            <person name="Chertkov O."/>
            <person name="Brettin T."/>
            <person name="Detter J.C."/>
            <person name="Han C."/>
            <person name="Kuske C.R."/>
            <person name="Schmutz J."/>
            <person name="Larimer F."/>
            <person name="Land M."/>
            <person name="Hauser L."/>
            <person name="Kyrpides N."/>
            <person name="Lykidis A."/>
            <person name="Emerson D."/>
            <person name="Richardson P."/>
        </authorList>
    </citation>
    <scope>NUCLEOTIDE SEQUENCE [LARGE SCALE GENOMIC DNA]</scope>
    <source>
        <strain>ATCC 51168 / LMG 8142 / SP-6</strain>
    </source>
</reference>
<accession>B1XY02</accession>
<keyword id="KW-0963">Cytoplasm</keyword>
<keyword id="KW-1185">Reference proteome</keyword>
<gene>
    <name evidence="1" type="primary">recX</name>
    <name type="ordered locus">Lcho_0496</name>
</gene>
<feature type="chain" id="PRO_1000137176" description="Regulatory protein RecX">
    <location>
        <begin position="1"/>
        <end position="157"/>
    </location>
</feature>
<organism>
    <name type="scientific">Leptothrix cholodnii (strain ATCC 51168 / LMG 8142 / SP-6)</name>
    <name type="common">Leptothrix discophora (strain SP-6)</name>
    <dbReference type="NCBI Taxonomy" id="395495"/>
    <lineage>
        <taxon>Bacteria</taxon>
        <taxon>Pseudomonadati</taxon>
        <taxon>Pseudomonadota</taxon>
        <taxon>Betaproteobacteria</taxon>
        <taxon>Burkholderiales</taxon>
        <taxon>Sphaerotilaceae</taxon>
        <taxon>Leptothrix</taxon>
    </lineage>
</organism>
<comment type="function">
    <text evidence="1">Modulates RecA activity.</text>
</comment>
<comment type="subcellular location">
    <subcellularLocation>
        <location evidence="1">Cytoplasm</location>
    </subcellularLocation>
</comment>
<comment type="similarity">
    <text evidence="1">Belongs to the RecX family.</text>
</comment>
<proteinExistence type="inferred from homology"/>
<name>RECX_LEPCP</name>
<protein>
    <recommendedName>
        <fullName evidence="1">Regulatory protein RecX</fullName>
    </recommendedName>
</protein>
<dbReference type="EMBL" id="CP001013">
    <property type="protein sequence ID" value="ACB32771.1"/>
    <property type="molecule type" value="Genomic_DNA"/>
</dbReference>
<dbReference type="RefSeq" id="WP_012345533.1">
    <property type="nucleotide sequence ID" value="NC_010524.1"/>
</dbReference>
<dbReference type="SMR" id="B1XY02"/>
<dbReference type="STRING" id="395495.Lcho_0496"/>
<dbReference type="KEGG" id="lch:Lcho_0496"/>
<dbReference type="eggNOG" id="COG2137">
    <property type="taxonomic scope" value="Bacteria"/>
</dbReference>
<dbReference type="HOGENOM" id="CLU_066607_3_1_4"/>
<dbReference type="OrthoDB" id="5295441at2"/>
<dbReference type="Proteomes" id="UP000001693">
    <property type="component" value="Chromosome"/>
</dbReference>
<dbReference type="GO" id="GO:0005737">
    <property type="term" value="C:cytoplasm"/>
    <property type="evidence" value="ECO:0007669"/>
    <property type="project" value="UniProtKB-SubCell"/>
</dbReference>
<dbReference type="GO" id="GO:0006282">
    <property type="term" value="P:regulation of DNA repair"/>
    <property type="evidence" value="ECO:0007669"/>
    <property type="project" value="UniProtKB-UniRule"/>
</dbReference>
<dbReference type="Gene3D" id="1.10.10.10">
    <property type="entry name" value="Winged helix-like DNA-binding domain superfamily/Winged helix DNA-binding domain"/>
    <property type="match status" value="3"/>
</dbReference>
<dbReference type="HAMAP" id="MF_01114">
    <property type="entry name" value="RecX"/>
    <property type="match status" value="1"/>
</dbReference>
<dbReference type="InterPro" id="IPR053926">
    <property type="entry name" value="RecX_HTH_1st"/>
</dbReference>
<dbReference type="InterPro" id="IPR053924">
    <property type="entry name" value="RecX_HTH_2nd"/>
</dbReference>
<dbReference type="InterPro" id="IPR053925">
    <property type="entry name" value="RecX_HTH_3rd"/>
</dbReference>
<dbReference type="InterPro" id="IPR003783">
    <property type="entry name" value="Regulatory_RecX"/>
</dbReference>
<dbReference type="InterPro" id="IPR036388">
    <property type="entry name" value="WH-like_DNA-bd_sf"/>
</dbReference>
<dbReference type="NCBIfam" id="NF001055">
    <property type="entry name" value="PRK00117.2-5"/>
    <property type="match status" value="1"/>
</dbReference>
<dbReference type="PANTHER" id="PTHR33602">
    <property type="entry name" value="REGULATORY PROTEIN RECX FAMILY PROTEIN"/>
    <property type="match status" value="1"/>
</dbReference>
<dbReference type="PANTHER" id="PTHR33602:SF1">
    <property type="entry name" value="REGULATORY PROTEIN RECX FAMILY PROTEIN"/>
    <property type="match status" value="1"/>
</dbReference>
<dbReference type="Pfam" id="PF21982">
    <property type="entry name" value="RecX_HTH1"/>
    <property type="match status" value="1"/>
</dbReference>
<dbReference type="Pfam" id="PF02631">
    <property type="entry name" value="RecX_HTH2"/>
    <property type="match status" value="1"/>
</dbReference>
<dbReference type="Pfam" id="PF21981">
    <property type="entry name" value="RecX_HTH3"/>
    <property type="match status" value="1"/>
</dbReference>
<evidence type="ECO:0000255" key="1">
    <source>
        <dbReference type="HAMAP-Rule" id="MF_01114"/>
    </source>
</evidence>
<sequence length="157" mass="17832">MASNRPQLSLKGRALKYLAAREHSRAELARKLAPHAGDPAEIEAVLDDLQARGFLSEARYVASVVHRRAERFGVARIRQELLSKGTPADQMTDALDALRTTELERARELWRRRFGQPPADAREAARQNRFLMSRGFSSDVVRQVLRLADHEHDHDNT</sequence>